<evidence type="ECO:0000255" key="1">
    <source>
        <dbReference type="HAMAP-Rule" id="MF_01014"/>
    </source>
</evidence>
<proteinExistence type="inferred from homology"/>
<dbReference type="EC" id="5.3.1.16" evidence="1"/>
<dbReference type="EMBL" id="CP000356">
    <property type="protein sequence ID" value="ABF54850.1"/>
    <property type="molecule type" value="Genomic_DNA"/>
</dbReference>
<dbReference type="RefSeq" id="WP_011543412.1">
    <property type="nucleotide sequence ID" value="NC_008048.1"/>
</dbReference>
<dbReference type="SMR" id="Q1GNC2"/>
<dbReference type="STRING" id="317655.Sala_3147"/>
<dbReference type="KEGG" id="sal:Sala_3147"/>
<dbReference type="eggNOG" id="COG0106">
    <property type="taxonomic scope" value="Bacteria"/>
</dbReference>
<dbReference type="HOGENOM" id="CLU_048577_1_1_5"/>
<dbReference type="OrthoDB" id="9807749at2"/>
<dbReference type="UniPathway" id="UPA00031">
    <property type="reaction ID" value="UER00009"/>
</dbReference>
<dbReference type="Proteomes" id="UP000006578">
    <property type="component" value="Chromosome"/>
</dbReference>
<dbReference type="GO" id="GO:0005737">
    <property type="term" value="C:cytoplasm"/>
    <property type="evidence" value="ECO:0007669"/>
    <property type="project" value="UniProtKB-SubCell"/>
</dbReference>
<dbReference type="GO" id="GO:0003949">
    <property type="term" value="F:1-(5-phosphoribosyl)-5-[(5-phosphoribosylamino)methylideneamino]imidazole-4-carboxamide isomerase activity"/>
    <property type="evidence" value="ECO:0007669"/>
    <property type="project" value="UniProtKB-UniRule"/>
</dbReference>
<dbReference type="GO" id="GO:0000105">
    <property type="term" value="P:L-histidine biosynthetic process"/>
    <property type="evidence" value="ECO:0007669"/>
    <property type="project" value="UniProtKB-UniRule"/>
</dbReference>
<dbReference type="GO" id="GO:0000162">
    <property type="term" value="P:L-tryptophan biosynthetic process"/>
    <property type="evidence" value="ECO:0007669"/>
    <property type="project" value="TreeGrafter"/>
</dbReference>
<dbReference type="CDD" id="cd04732">
    <property type="entry name" value="HisA"/>
    <property type="match status" value="1"/>
</dbReference>
<dbReference type="FunFam" id="3.20.20.70:FF:000009">
    <property type="entry name" value="1-(5-phosphoribosyl)-5-[(5-phosphoribosylamino)methylideneamino] imidazole-4-carboxamide isomerase"/>
    <property type="match status" value="1"/>
</dbReference>
<dbReference type="Gene3D" id="3.20.20.70">
    <property type="entry name" value="Aldolase class I"/>
    <property type="match status" value="1"/>
</dbReference>
<dbReference type="HAMAP" id="MF_01014">
    <property type="entry name" value="HisA"/>
    <property type="match status" value="1"/>
</dbReference>
<dbReference type="InterPro" id="IPR013785">
    <property type="entry name" value="Aldolase_TIM"/>
</dbReference>
<dbReference type="InterPro" id="IPR006062">
    <property type="entry name" value="His_biosynth"/>
</dbReference>
<dbReference type="InterPro" id="IPR006063">
    <property type="entry name" value="HisA_bact_arch"/>
</dbReference>
<dbReference type="InterPro" id="IPR044524">
    <property type="entry name" value="Isoase_HisA-like"/>
</dbReference>
<dbReference type="InterPro" id="IPR023016">
    <property type="entry name" value="Isoase_HisA-like_bact"/>
</dbReference>
<dbReference type="InterPro" id="IPR011060">
    <property type="entry name" value="RibuloseP-bd_barrel"/>
</dbReference>
<dbReference type="NCBIfam" id="TIGR00007">
    <property type="entry name" value="1-(5-phosphoribosyl)-5-[(5-phosphoribosylamino)methylideneamino]imidazole-4-carboxamide isomerase"/>
    <property type="match status" value="1"/>
</dbReference>
<dbReference type="PANTHER" id="PTHR43090">
    <property type="entry name" value="1-(5-PHOSPHORIBOSYL)-5-[(5-PHOSPHORIBOSYLAMINO)METHYLIDENEAMINO] IMIDAZOLE-4-CARBOXAMIDE ISOMERASE"/>
    <property type="match status" value="1"/>
</dbReference>
<dbReference type="PANTHER" id="PTHR43090:SF2">
    <property type="entry name" value="1-(5-PHOSPHORIBOSYL)-5-[(5-PHOSPHORIBOSYLAMINO)METHYLIDENEAMINO] IMIDAZOLE-4-CARBOXAMIDE ISOMERASE"/>
    <property type="match status" value="1"/>
</dbReference>
<dbReference type="Pfam" id="PF00977">
    <property type="entry name" value="His_biosynth"/>
    <property type="match status" value="1"/>
</dbReference>
<dbReference type="SUPFAM" id="SSF51366">
    <property type="entry name" value="Ribulose-phoshate binding barrel"/>
    <property type="match status" value="1"/>
</dbReference>
<feature type="chain" id="PRO_0000290546" description="1-(5-phosphoribosyl)-5-[(5-phosphoribosylamino)methylideneamino] imidazole-4-carboxamide isomerase">
    <location>
        <begin position="1"/>
        <end position="244"/>
    </location>
</feature>
<feature type="active site" description="Proton acceptor" evidence="1">
    <location>
        <position position="11"/>
    </location>
</feature>
<feature type="active site" description="Proton donor" evidence="1">
    <location>
        <position position="132"/>
    </location>
</feature>
<accession>Q1GNC2</accession>
<keyword id="KW-0028">Amino-acid biosynthesis</keyword>
<keyword id="KW-0963">Cytoplasm</keyword>
<keyword id="KW-0368">Histidine biosynthesis</keyword>
<keyword id="KW-0413">Isomerase</keyword>
<keyword id="KW-1185">Reference proteome</keyword>
<protein>
    <recommendedName>
        <fullName evidence="1">1-(5-phosphoribosyl)-5-[(5-phosphoribosylamino)methylideneamino] imidazole-4-carboxamide isomerase</fullName>
        <ecNumber evidence="1">5.3.1.16</ecNumber>
    </recommendedName>
    <alternativeName>
        <fullName evidence="1">Phosphoribosylformimino-5-aminoimidazole carboxamide ribotide isomerase</fullName>
    </alternativeName>
</protein>
<reference key="1">
    <citation type="journal article" date="2009" name="Proc. Natl. Acad. Sci. U.S.A.">
        <title>The genomic basis of trophic strategy in marine bacteria.</title>
        <authorList>
            <person name="Lauro F.M."/>
            <person name="McDougald D."/>
            <person name="Thomas T."/>
            <person name="Williams T.J."/>
            <person name="Egan S."/>
            <person name="Rice S."/>
            <person name="DeMaere M.Z."/>
            <person name="Ting L."/>
            <person name="Ertan H."/>
            <person name="Johnson J."/>
            <person name="Ferriera S."/>
            <person name="Lapidus A."/>
            <person name="Anderson I."/>
            <person name="Kyrpides N."/>
            <person name="Munk A.C."/>
            <person name="Detter C."/>
            <person name="Han C.S."/>
            <person name="Brown M.V."/>
            <person name="Robb F.T."/>
            <person name="Kjelleberg S."/>
            <person name="Cavicchioli R."/>
        </authorList>
    </citation>
    <scope>NUCLEOTIDE SEQUENCE [LARGE SCALE GENOMIC DNA]</scope>
    <source>
        <strain>DSM 13593 / LMG 18877 / RB2256</strain>
    </source>
</reference>
<gene>
    <name evidence="1" type="primary">hisA</name>
    <name type="ordered locus">Sala_3147</name>
</gene>
<name>HIS4_SPHAL</name>
<organism>
    <name type="scientific">Sphingopyxis alaskensis (strain DSM 13593 / LMG 18877 / RB2256)</name>
    <name type="common">Sphingomonas alaskensis</name>
    <dbReference type="NCBI Taxonomy" id="317655"/>
    <lineage>
        <taxon>Bacteria</taxon>
        <taxon>Pseudomonadati</taxon>
        <taxon>Pseudomonadota</taxon>
        <taxon>Alphaproteobacteria</taxon>
        <taxon>Sphingomonadales</taxon>
        <taxon>Sphingomonadaceae</taxon>
        <taxon>Sphingopyxis</taxon>
    </lineage>
</organism>
<comment type="catalytic activity">
    <reaction evidence="1">
        <text>1-(5-phospho-beta-D-ribosyl)-5-[(5-phospho-beta-D-ribosylamino)methylideneamino]imidazole-4-carboxamide = 5-[(5-phospho-1-deoxy-D-ribulos-1-ylimino)methylamino]-1-(5-phospho-beta-D-ribosyl)imidazole-4-carboxamide</text>
        <dbReference type="Rhea" id="RHEA:15469"/>
        <dbReference type="ChEBI" id="CHEBI:58435"/>
        <dbReference type="ChEBI" id="CHEBI:58525"/>
        <dbReference type="EC" id="5.3.1.16"/>
    </reaction>
</comment>
<comment type="pathway">
    <text evidence="1">Amino-acid biosynthesis; L-histidine biosynthesis; L-histidine from 5-phospho-alpha-D-ribose 1-diphosphate: step 4/9.</text>
</comment>
<comment type="subcellular location">
    <subcellularLocation>
        <location evidence="1">Cytoplasm</location>
    </subcellularLocation>
</comment>
<comment type="similarity">
    <text evidence="1">Belongs to the HisA/HisF family.</text>
</comment>
<sequence length="244" mass="24822">MAALTIFPAIDLKAGQVVRLAEGDMDRATVYGDDPAAQARRFADAGATHLHVVDLDGAFAGASVNGAAVESIIAAFPGQVQVGGGIRDRAGVDRWLALGVARVIIGTAALKDPEFVKSAARDLPGRIVVGVDARDGMVATEGWADVSDVRVEDLARRFEDAGVAALLFTDVGRDGLLKGCNVAATVALAGVVDIPVIASGGVAGIEDIHALRPHVADGIEGVITGRALYDGRLDLAEAIAAGAA</sequence>